<proteinExistence type="inferred from homology"/>
<dbReference type="EC" id="2.6.1.11" evidence="1"/>
<dbReference type="EMBL" id="CP000029">
    <property type="protein sequence ID" value="AAW54473.1"/>
    <property type="molecule type" value="Genomic_DNA"/>
</dbReference>
<dbReference type="SMR" id="Q5HP24"/>
<dbReference type="STRING" id="176279.SERP1089"/>
<dbReference type="KEGG" id="ser:SERP1089"/>
<dbReference type="eggNOG" id="COG4992">
    <property type="taxonomic scope" value="Bacteria"/>
</dbReference>
<dbReference type="HOGENOM" id="CLU_016922_10_1_9"/>
<dbReference type="UniPathway" id="UPA00068">
    <property type="reaction ID" value="UER00109"/>
</dbReference>
<dbReference type="Proteomes" id="UP000000531">
    <property type="component" value="Chromosome"/>
</dbReference>
<dbReference type="GO" id="GO:0005737">
    <property type="term" value="C:cytoplasm"/>
    <property type="evidence" value="ECO:0007669"/>
    <property type="project" value="UniProtKB-SubCell"/>
</dbReference>
<dbReference type="GO" id="GO:0042802">
    <property type="term" value="F:identical protein binding"/>
    <property type="evidence" value="ECO:0007669"/>
    <property type="project" value="TreeGrafter"/>
</dbReference>
<dbReference type="GO" id="GO:0003992">
    <property type="term" value="F:N2-acetyl-L-ornithine:2-oxoglutarate 5-aminotransferase activity"/>
    <property type="evidence" value="ECO:0007669"/>
    <property type="project" value="UniProtKB-UniRule"/>
</dbReference>
<dbReference type="GO" id="GO:0030170">
    <property type="term" value="F:pyridoxal phosphate binding"/>
    <property type="evidence" value="ECO:0007669"/>
    <property type="project" value="InterPro"/>
</dbReference>
<dbReference type="GO" id="GO:0006526">
    <property type="term" value="P:L-arginine biosynthetic process"/>
    <property type="evidence" value="ECO:0007669"/>
    <property type="project" value="UniProtKB-UniRule"/>
</dbReference>
<dbReference type="CDD" id="cd00610">
    <property type="entry name" value="OAT_like"/>
    <property type="match status" value="1"/>
</dbReference>
<dbReference type="FunFam" id="3.40.640.10:FF:000004">
    <property type="entry name" value="Acetylornithine aminotransferase"/>
    <property type="match status" value="1"/>
</dbReference>
<dbReference type="Gene3D" id="3.90.1150.10">
    <property type="entry name" value="Aspartate Aminotransferase, domain 1"/>
    <property type="match status" value="1"/>
</dbReference>
<dbReference type="Gene3D" id="3.40.640.10">
    <property type="entry name" value="Type I PLP-dependent aspartate aminotransferase-like (Major domain)"/>
    <property type="match status" value="1"/>
</dbReference>
<dbReference type="HAMAP" id="MF_01107">
    <property type="entry name" value="ArgD_aminotrans_3"/>
    <property type="match status" value="1"/>
</dbReference>
<dbReference type="InterPro" id="IPR004636">
    <property type="entry name" value="AcOrn/SuccOrn_fam"/>
</dbReference>
<dbReference type="InterPro" id="IPR005814">
    <property type="entry name" value="Aminotrans_3"/>
</dbReference>
<dbReference type="InterPro" id="IPR049704">
    <property type="entry name" value="Aminotrans_3_PPA_site"/>
</dbReference>
<dbReference type="InterPro" id="IPR050103">
    <property type="entry name" value="Class-III_PLP-dep_AT"/>
</dbReference>
<dbReference type="InterPro" id="IPR015424">
    <property type="entry name" value="PyrdxlP-dep_Trfase"/>
</dbReference>
<dbReference type="InterPro" id="IPR015421">
    <property type="entry name" value="PyrdxlP-dep_Trfase_major"/>
</dbReference>
<dbReference type="InterPro" id="IPR015422">
    <property type="entry name" value="PyrdxlP-dep_Trfase_small"/>
</dbReference>
<dbReference type="NCBIfam" id="TIGR00707">
    <property type="entry name" value="argD"/>
    <property type="match status" value="1"/>
</dbReference>
<dbReference type="NCBIfam" id="NF002325">
    <property type="entry name" value="PRK01278.1"/>
    <property type="match status" value="1"/>
</dbReference>
<dbReference type="NCBIfam" id="NF002797">
    <property type="entry name" value="PRK02936.1"/>
    <property type="match status" value="1"/>
</dbReference>
<dbReference type="NCBIfam" id="NF003273">
    <property type="entry name" value="PRK04260.1"/>
    <property type="match status" value="1"/>
</dbReference>
<dbReference type="PANTHER" id="PTHR11986:SF79">
    <property type="entry name" value="ACETYLORNITHINE AMINOTRANSFERASE, MITOCHONDRIAL"/>
    <property type="match status" value="1"/>
</dbReference>
<dbReference type="PANTHER" id="PTHR11986">
    <property type="entry name" value="AMINOTRANSFERASE CLASS III"/>
    <property type="match status" value="1"/>
</dbReference>
<dbReference type="Pfam" id="PF00202">
    <property type="entry name" value="Aminotran_3"/>
    <property type="match status" value="1"/>
</dbReference>
<dbReference type="PIRSF" id="PIRSF000521">
    <property type="entry name" value="Transaminase_4ab_Lys_Orn"/>
    <property type="match status" value="1"/>
</dbReference>
<dbReference type="SUPFAM" id="SSF53383">
    <property type="entry name" value="PLP-dependent transferases"/>
    <property type="match status" value="1"/>
</dbReference>
<dbReference type="PROSITE" id="PS00600">
    <property type="entry name" value="AA_TRANSFER_CLASS_3"/>
    <property type="match status" value="1"/>
</dbReference>
<protein>
    <recommendedName>
        <fullName evidence="1">Acetylornithine aminotransferase</fullName>
        <shortName evidence="1">ACOAT</shortName>
        <ecNumber evidence="1">2.6.1.11</ecNumber>
    </recommendedName>
</protein>
<comment type="catalytic activity">
    <reaction evidence="1">
        <text>N(2)-acetyl-L-ornithine + 2-oxoglutarate = N-acetyl-L-glutamate 5-semialdehyde + L-glutamate</text>
        <dbReference type="Rhea" id="RHEA:18049"/>
        <dbReference type="ChEBI" id="CHEBI:16810"/>
        <dbReference type="ChEBI" id="CHEBI:29123"/>
        <dbReference type="ChEBI" id="CHEBI:29985"/>
        <dbReference type="ChEBI" id="CHEBI:57805"/>
        <dbReference type="EC" id="2.6.1.11"/>
    </reaction>
</comment>
<comment type="cofactor">
    <cofactor evidence="1">
        <name>pyridoxal 5'-phosphate</name>
        <dbReference type="ChEBI" id="CHEBI:597326"/>
    </cofactor>
    <text evidence="1">Binds 1 pyridoxal phosphate per subunit.</text>
</comment>
<comment type="pathway">
    <text evidence="1">Amino-acid biosynthesis; L-arginine biosynthesis; N(2)-acetyl-L-ornithine from L-glutamate: step 4/4.</text>
</comment>
<comment type="subunit">
    <text evidence="1">Homodimer.</text>
</comment>
<comment type="subcellular location">
    <subcellularLocation>
        <location evidence="1">Cytoplasm</location>
    </subcellularLocation>
</comment>
<comment type="miscellaneous">
    <text evidence="1">May also have succinyldiaminopimelate aminotransferase activity, thus carrying out the corresponding step in lysine biosynthesis.</text>
</comment>
<comment type="similarity">
    <text evidence="1">Belongs to the class-III pyridoxal-phosphate-dependent aminotransferase family. ArgD subfamily.</text>
</comment>
<organism>
    <name type="scientific">Staphylococcus epidermidis (strain ATCC 35984 / DSM 28319 / BCRC 17069 / CCUG 31568 / BM 3577 / RP62A)</name>
    <dbReference type="NCBI Taxonomy" id="176279"/>
    <lineage>
        <taxon>Bacteria</taxon>
        <taxon>Bacillati</taxon>
        <taxon>Bacillota</taxon>
        <taxon>Bacilli</taxon>
        <taxon>Bacillales</taxon>
        <taxon>Staphylococcaceae</taxon>
        <taxon>Staphylococcus</taxon>
    </lineage>
</organism>
<reference key="1">
    <citation type="journal article" date="2005" name="J. Bacteriol.">
        <title>Insights on evolution of virulence and resistance from the complete genome analysis of an early methicillin-resistant Staphylococcus aureus strain and a biofilm-producing methicillin-resistant Staphylococcus epidermidis strain.</title>
        <authorList>
            <person name="Gill S.R."/>
            <person name="Fouts D.E."/>
            <person name="Archer G.L."/>
            <person name="Mongodin E.F."/>
            <person name="DeBoy R.T."/>
            <person name="Ravel J."/>
            <person name="Paulsen I.T."/>
            <person name="Kolonay J.F."/>
            <person name="Brinkac L.M."/>
            <person name="Beanan M.J."/>
            <person name="Dodson R.J."/>
            <person name="Daugherty S.C."/>
            <person name="Madupu R."/>
            <person name="Angiuoli S.V."/>
            <person name="Durkin A.S."/>
            <person name="Haft D.H."/>
            <person name="Vamathevan J.J."/>
            <person name="Khouri H."/>
            <person name="Utterback T.R."/>
            <person name="Lee C."/>
            <person name="Dimitrov G."/>
            <person name="Jiang L."/>
            <person name="Qin H."/>
            <person name="Weidman J."/>
            <person name="Tran K."/>
            <person name="Kang K.H."/>
            <person name="Hance I.R."/>
            <person name="Nelson K.E."/>
            <person name="Fraser C.M."/>
        </authorList>
    </citation>
    <scope>NUCLEOTIDE SEQUENCE [LARGE SCALE GENOMIC DNA]</scope>
    <source>
        <strain>ATCC 35984 / DSM 28319 / BCRC 17069 / CCUG 31568 / BM 3577 / RP62A</strain>
    </source>
</reference>
<gene>
    <name evidence="1" type="primary">argD</name>
    <name type="ordered locus">SERP1089</name>
</gene>
<keyword id="KW-0028">Amino-acid biosynthesis</keyword>
<keyword id="KW-0032">Aminotransferase</keyword>
<keyword id="KW-0055">Arginine biosynthesis</keyword>
<keyword id="KW-0963">Cytoplasm</keyword>
<keyword id="KW-0663">Pyridoxal phosphate</keyword>
<keyword id="KW-1185">Reference proteome</keyword>
<keyword id="KW-0808">Transferase</keyword>
<accession>Q5HP24</accession>
<evidence type="ECO:0000255" key="1">
    <source>
        <dbReference type="HAMAP-Rule" id="MF_01107"/>
    </source>
</evidence>
<feature type="chain" id="PRO_0000112795" description="Acetylornithine aminotransferase">
    <location>
        <begin position="1"/>
        <end position="375"/>
    </location>
</feature>
<feature type="binding site" evidence="1">
    <location>
        <begin position="93"/>
        <end position="94"/>
    </location>
    <ligand>
        <name>pyridoxal 5'-phosphate</name>
        <dbReference type="ChEBI" id="CHEBI:597326"/>
    </ligand>
</feature>
<feature type="binding site" evidence="1">
    <location>
        <position position="120"/>
    </location>
    <ligand>
        <name>pyridoxal 5'-phosphate</name>
        <dbReference type="ChEBI" id="CHEBI:597326"/>
    </ligand>
</feature>
<feature type="binding site" evidence="1">
    <location>
        <position position="123"/>
    </location>
    <ligand>
        <name>N(2)-acetyl-L-ornithine</name>
        <dbReference type="ChEBI" id="CHEBI:57805"/>
    </ligand>
</feature>
<feature type="binding site" evidence="1">
    <location>
        <begin position="205"/>
        <end position="208"/>
    </location>
    <ligand>
        <name>pyridoxal 5'-phosphate</name>
        <dbReference type="ChEBI" id="CHEBI:597326"/>
    </ligand>
</feature>
<feature type="binding site" evidence="1">
    <location>
        <position position="262"/>
    </location>
    <ligand>
        <name>N(2)-acetyl-L-ornithine</name>
        <dbReference type="ChEBI" id="CHEBI:57805"/>
    </ligand>
</feature>
<feature type="binding site" evidence="1">
    <location>
        <position position="263"/>
    </location>
    <ligand>
        <name>pyridoxal 5'-phosphate</name>
        <dbReference type="ChEBI" id="CHEBI:597326"/>
    </ligand>
</feature>
<feature type="modified residue" description="N6-(pyridoxal phosphate)lysine" evidence="1">
    <location>
        <position position="234"/>
    </location>
</feature>
<name>ARGD_STAEQ</name>
<sequence length="375" mass="41314">MSYLFNNYKRDNIEFVDANQNELIDKDNNVYLDFSSGIGVTNLGFNMEIYQAVYNQLNLIWHSPNLYLSSIQEEVAQKLIGQRDYLAFFCNSGTEANEAAIKLARKATGKSEIIAFKKSFHGRTYGAMSATGQKKITDQFGPVVPGFKFAIFNDFNSFKSLTSNNTAAVIIEIIQGESGVLPADSLFMKQLNEYCKQKDILIIVDEVQTGIGRTGKLYAHEHYQLSPDIITLAKGLGNGLPIGAMLGKKNLGHAFGYGSHGTTFGGNRLSLAAANQTLSIINDADLLNDVQSKGQFLIENLRKSLVNKRNVIEVRGVGLMVGIEVTNDPSQVVREAKRMGLIILTAGKNVIRLLPPLTITKKQLEKGIEILTEII</sequence>